<dbReference type="EMBL" id="AP008934">
    <property type="protein sequence ID" value="BAE18379.1"/>
    <property type="molecule type" value="Genomic_DNA"/>
</dbReference>
<dbReference type="RefSeq" id="WP_011303040.1">
    <property type="nucleotide sequence ID" value="NZ_MTGA01000038.1"/>
</dbReference>
<dbReference type="SMR" id="Q49XW5"/>
<dbReference type="GeneID" id="3617001"/>
<dbReference type="KEGG" id="ssp:SSP1234"/>
<dbReference type="PATRIC" id="fig|342451.11.peg.1235"/>
<dbReference type="eggNOG" id="COG1438">
    <property type="taxonomic scope" value="Bacteria"/>
</dbReference>
<dbReference type="HOGENOM" id="CLU_097103_3_0_9"/>
<dbReference type="OrthoDB" id="9807089at2"/>
<dbReference type="UniPathway" id="UPA00068"/>
<dbReference type="Proteomes" id="UP000006371">
    <property type="component" value="Chromosome"/>
</dbReference>
<dbReference type="GO" id="GO:0005737">
    <property type="term" value="C:cytoplasm"/>
    <property type="evidence" value="ECO:0007669"/>
    <property type="project" value="UniProtKB-SubCell"/>
</dbReference>
<dbReference type="GO" id="GO:0034618">
    <property type="term" value="F:arginine binding"/>
    <property type="evidence" value="ECO:0007669"/>
    <property type="project" value="InterPro"/>
</dbReference>
<dbReference type="GO" id="GO:0003677">
    <property type="term" value="F:DNA binding"/>
    <property type="evidence" value="ECO:0007669"/>
    <property type="project" value="UniProtKB-KW"/>
</dbReference>
<dbReference type="GO" id="GO:0003700">
    <property type="term" value="F:DNA-binding transcription factor activity"/>
    <property type="evidence" value="ECO:0007669"/>
    <property type="project" value="UniProtKB-UniRule"/>
</dbReference>
<dbReference type="GO" id="GO:0006526">
    <property type="term" value="P:L-arginine biosynthetic process"/>
    <property type="evidence" value="ECO:0007669"/>
    <property type="project" value="UniProtKB-UniPathway"/>
</dbReference>
<dbReference type="GO" id="GO:0051259">
    <property type="term" value="P:protein complex oligomerization"/>
    <property type="evidence" value="ECO:0007669"/>
    <property type="project" value="InterPro"/>
</dbReference>
<dbReference type="GO" id="GO:1900079">
    <property type="term" value="P:regulation of arginine biosynthetic process"/>
    <property type="evidence" value="ECO:0007669"/>
    <property type="project" value="UniProtKB-UniRule"/>
</dbReference>
<dbReference type="Gene3D" id="3.30.1360.40">
    <property type="match status" value="1"/>
</dbReference>
<dbReference type="Gene3D" id="1.10.10.10">
    <property type="entry name" value="Winged helix-like DNA-binding domain superfamily/Winged helix DNA-binding domain"/>
    <property type="match status" value="1"/>
</dbReference>
<dbReference type="HAMAP" id="MF_00173">
    <property type="entry name" value="Arg_repressor"/>
    <property type="match status" value="1"/>
</dbReference>
<dbReference type="InterPro" id="IPR001669">
    <property type="entry name" value="Arg_repress"/>
</dbReference>
<dbReference type="InterPro" id="IPR020899">
    <property type="entry name" value="Arg_repress_C"/>
</dbReference>
<dbReference type="InterPro" id="IPR036251">
    <property type="entry name" value="Arg_repress_C_sf"/>
</dbReference>
<dbReference type="InterPro" id="IPR020900">
    <property type="entry name" value="Arg_repress_DNA-bd"/>
</dbReference>
<dbReference type="InterPro" id="IPR036388">
    <property type="entry name" value="WH-like_DNA-bd_sf"/>
</dbReference>
<dbReference type="InterPro" id="IPR036390">
    <property type="entry name" value="WH_DNA-bd_sf"/>
</dbReference>
<dbReference type="NCBIfam" id="TIGR01529">
    <property type="entry name" value="argR_whole"/>
    <property type="match status" value="1"/>
</dbReference>
<dbReference type="NCBIfam" id="NF003281">
    <property type="entry name" value="PRK04280.1"/>
    <property type="match status" value="1"/>
</dbReference>
<dbReference type="PANTHER" id="PTHR34471">
    <property type="entry name" value="ARGININE REPRESSOR"/>
    <property type="match status" value="1"/>
</dbReference>
<dbReference type="PANTHER" id="PTHR34471:SF1">
    <property type="entry name" value="ARGININE REPRESSOR"/>
    <property type="match status" value="1"/>
</dbReference>
<dbReference type="Pfam" id="PF01316">
    <property type="entry name" value="Arg_repressor"/>
    <property type="match status" value="1"/>
</dbReference>
<dbReference type="Pfam" id="PF02863">
    <property type="entry name" value="Arg_repressor_C"/>
    <property type="match status" value="1"/>
</dbReference>
<dbReference type="PRINTS" id="PR01467">
    <property type="entry name" value="ARGREPRESSOR"/>
</dbReference>
<dbReference type="SUPFAM" id="SSF55252">
    <property type="entry name" value="C-terminal domain of arginine repressor"/>
    <property type="match status" value="1"/>
</dbReference>
<dbReference type="SUPFAM" id="SSF46785">
    <property type="entry name" value="Winged helix' DNA-binding domain"/>
    <property type="match status" value="1"/>
</dbReference>
<protein>
    <recommendedName>
        <fullName evidence="1">Arginine repressor</fullName>
    </recommendedName>
</protein>
<name>ARGR_STAS1</name>
<comment type="function">
    <text evidence="1">Regulates arginine biosynthesis genes.</text>
</comment>
<comment type="pathway">
    <text>Amino-acid biosynthesis; L-arginine biosynthesis [regulation].</text>
</comment>
<comment type="subcellular location">
    <subcellularLocation>
        <location evidence="1">Cytoplasm</location>
    </subcellularLocation>
</comment>
<comment type="similarity">
    <text evidence="1">Belongs to the ArgR family.</text>
</comment>
<organism>
    <name type="scientific">Staphylococcus saprophyticus subsp. saprophyticus (strain ATCC 15305 / DSM 20229 / NCIMB 8711 / NCTC 7292 / S-41)</name>
    <dbReference type="NCBI Taxonomy" id="342451"/>
    <lineage>
        <taxon>Bacteria</taxon>
        <taxon>Bacillati</taxon>
        <taxon>Bacillota</taxon>
        <taxon>Bacilli</taxon>
        <taxon>Bacillales</taxon>
        <taxon>Staphylococcaceae</taxon>
        <taxon>Staphylococcus</taxon>
    </lineage>
</organism>
<accession>Q49XW5</accession>
<reference key="1">
    <citation type="journal article" date="2005" name="Proc. Natl. Acad. Sci. U.S.A.">
        <title>Whole genome sequence of Staphylococcus saprophyticus reveals the pathogenesis of uncomplicated urinary tract infection.</title>
        <authorList>
            <person name="Kuroda M."/>
            <person name="Yamashita A."/>
            <person name="Hirakawa H."/>
            <person name="Kumano M."/>
            <person name="Morikawa K."/>
            <person name="Higashide M."/>
            <person name="Maruyama A."/>
            <person name="Inose Y."/>
            <person name="Matoba K."/>
            <person name="Toh H."/>
            <person name="Kuhara S."/>
            <person name="Hattori M."/>
            <person name="Ohta T."/>
        </authorList>
    </citation>
    <scope>NUCLEOTIDE SEQUENCE [LARGE SCALE GENOMIC DNA]</scope>
    <source>
        <strain>ATCC 15305 / DSM 20229 / NCIMB 8711 / NCTC 7292 / S-41</strain>
    </source>
</reference>
<evidence type="ECO:0000255" key="1">
    <source>
        <dbReference type="HAMAP-Rule" id="MF_00173"/>
    </source>
</evidence>
<keyword id="KW-0028">Amino-acid biosynthesis</keyword>
<keyword id="KW-0055">Arginine biosynthesis</keyword>
<keyword id="KW-0963">Cytoplasm</keyword>
<keyword id="KW-0238">DNA-binding</keyword>
<keyword id="KW-1185">Reference proteome</keyword>
<keyword id="KW-0678">Repressor</keyword>
<keyword id="KW-0804">Transcription</keyword>
<keyword id="KW-0805">Transcription regulation</keyword>
<sequence>MAKKSVRHIKIREIISNEKIETQDELVKRLNEYELNVTQATVSRDIKELQLIKVPTPAGQYVYSLPNDRKYHPLEKLGRYLIDSFVNIDGTGNLLVLKTLPGNAQSIGAILDQIDWEDVLGTICGDDTCLIICRDDAASEKIKTRIFNLL</sequence>
<gene>
    <name evidence="1" type="primary">argR</name>
    <name type="ordered locus">SSP1234</name>
</gene>
<proteinExistence type="inferred from homology"/>
<feature type="chain" id="PRO_1000023608" description="Arginine repressor">
    <location>
        <begin position="1"/>
        <end position="150"/>
    </location>
</feature>